<gene>
    <name evidence="1" type="primary">ndk</name>
    <name type="ordered locus">CF0885</name>
</gene>
<name>NDK_CHLFF</name>
<feature type="chain" id="PRO_0000242496" description="Nucleoside diphosphate kinase">
    <location>
        <begin position="1"/>
        <end position="141"/>
    </location>
</feature>
<feature type="active site" description="Pros-phosphohistidine intermediate" evidence="1">
    <location>
        <position position="115"/>
    </location>
</feature>
<feature type="binding site" evidence="1">
    <location>
        <position position="9"/>
    </location>
    <ligand>
        <name>ATP</name>
        <dbReference type="ChEBI" id="CHEBI:30616"/>
    </ligand>
</feature>
<feature type="binding site" evidence="1">
    <location>
        <position position="57"/>
    </location>
    <ligand>
        <name>ATP</name>
        <dbReference type="ChEBI" id="CHEBI:30616"/>
    </ligand>
</feature>
<feature type="binding site" evidence="1">
    <location>
        <position position="85"/>
    </location>
    <ligand>
        <name>ATP</name>
        <dbReference type="ChEBI" id="CHEBI:30616"/>
    </ligand>
</feature>
<feature type="binding site" evidence="1">
    <location>
        <position position="91"/>
    </location>
    <ligand>
        <name>ATP</name>
        <dbReference type="ChEBI" id="CHEBI:30616"/>
    </ligand>
</feature>
<feature type="binding site" evidence="1">
    <location>
        <position position="102"/>
    </location>
    <ligand>
        <name>ATP</name>
        <dbReference type="ChEBI" id="CHEBI:30616"/>
    </ligand>
</feature>
<feature type="binding site" evidence="1">
    <location>
        <position position="112"/>
    </location>
    <ligand>
        <name>ATP</name>
        <dbReference type="ChEBI" id="CHEBI:30616"/>
    </ligand>
</feature>
<evidence type="ECO:0000255" key="1">
    <source>
        <dbReference type="HAMAP-Rule" id="MF_00451"/>
    </source>
</evidence>
<keyword id="KW-0067">ATP-binding</keyword>
<keyword id="KW-0963">Cytoplasm</keyword>
<keyword id="KW-0418">Kinase</keyword>
<keyword id="KW-0460">Magnesium</keyword>
<keyword id="KW-0479">Metal-binding</keyword>
<keyword id="KW-0546">Nucleotide metabolism</keyword>
<keyword id="KW-0547">Nucleotide-binding</keyword>
<keyword id="KW-0597">Phosphoprotein</keyword>
<keyword id="KW-0808">Transferase</keyword>
<dbReference type="EC" id="2.7.4.6" evidence="1"/>
<dbReference type="EMBL" id="AP006861">
    <property type="protein sequence ID" value="BAE81657.1"/>
    <property type="molecule type" value="Genomic_DNA"/>
</dbReference>
<dbReference type="RefSeq" id="WP_011458432.1">
    <property type="nucleotide sequence ID" value="NC_007899.1"/>
</dbReference>
<dbReference type="SMR" id="Q252Y1"/>
<dbReference type="STRING" id="264202.CF0885"/>
<dbReference type="KEGG" id="cfe:CF0885"/>
<dbReference type="eggNOG" id="COG0105">
    <property type="taxonomic scope" value="Bacteria"/>
</dbReference>
<dbReference type="HOGENOM" id="CLU_060216_8_1_0"/>
<dbReference type="OrthoDB" id="9801161at2"/>
<dbReference type="Proteomes" id="UP000001260">
    <property type="component" value="Chromosome"/>
</dbReference>
<dbReference type="GO" id="GO:0005737">
    <property type="term" value="C:cytoplasm"/>
    <property type="evidence" value="ECO:0007669"/>
    <property type="project" value="UniProtKB-SubCell"/>
</dbReference>
<dbReference type="GO" id="GO:0005524">
    <property type="term" value="F:ATP binding"/>
    <property type="evidence" value="ECO:0007669"/>
    <property type="project" value="UniProtKB-UniRule"/>
</dbReference>
<dbReference type="GO" id="GO:0046872">
    <property type="term" value="F:metal ion binding"/>
    <property type="evidence" value="ECO:0007669"/>
    <property type="project" value="UniProtKB-KW"/>
</dbReference>
<dbReference type="GO" id="GO:0004550">
    <property type="term" value="F:nucleoside diphosphate kinase activity"/>
    <property type="evidence" value="ECO:0007669"/>
    <property type="project" value="UniProtKB-UniRule"/>
</dbReference>
<dbReference type="GO" id="GO:0006241">
    <property type="term" value="P:CTP biosynthetic process"/>
    <property type="evidence" value="ECO:0007669"/>
    <property type="project" value="UniProtKB-UniRule"/>
</dbReference>
<dbReference type="GO" id="GO:0006183">
    <property type="term" value="P:GTP biosynthetic process"/>
    <property type="evidence" value="ECO:0007669"/>
    <property type="project" value="UniProtKB-UniRule"/>
</dbReference>
<dbReference type="GO" id="GO:0006228">
    <property type="term" value="P:UTP biosynthetic process"/>
    <property type="evidence" value="ECO:0007669"/>
    <property type="project" value="UniProtKB-UniRule"/>
</dbReference>
<dbReference type="CDD" id="cd04413">
    <property type="entry name" value="NDPk_I"/>
    <property type="match status" value="1"/>
</dbReference>
<dbReference type="FunFam" id="3.30.70.141:FF:000001">
    <property type="entry name" value="Nucleoside diphosphate kinase"/>
    <property type="match status" value="1"/>
</dbReference>
<dbReference type="Gene3D" id="3.30.70.141">
    <property type="entry name" value="Nucleoside diphosphate kinase-like domain"/>
    <property type="match status" value="1"/>
</dbReference>
<dbReference type="HAMAP" id="MF_00451">
    <property type="entry name" value="NDP_kinase"/>
    <property type="match status" value="1"/>
</dbReference>
<dbReference type="InterPro" id="IPR034907">
    <property type="entry name" value="NDK-like_dom"/>
</dbReference>
<dbReference type="InterPro" id="IPR036850">
    <property type="entry name" value="NDK-like_dom_sf"/>
</dbReference>
<dbReference type="InterPro" id="IPR001564">
    <property type="entry name" value="Nucleoside_diP_kinase"/>
</dbReference>
<dbReference type="InterPro" id="IPR023005">
    <property type="entry name" value="Nucleoside_diP_kinase_AS"/>
</dbReference>
<dbReference type="NCBIfam" id="NF001908">
    <property type="entry name" value="PRK00668.1"/>
    <property type="match status" value="1"/>
</dbReference>
<dbReference type="PANTHER" id="PTHR11349">
    <property type="entry name" value="NUCLEOSIDE DIPHOSPHATE KINASE"/>
    <property type="match status" value="1"/>
</dbReference>
<dbReference type="Pfam" id="PF00334">
    <property type="entry name" value="NDK"/>
    <property type="match status" value="1"/>
</dbReference>
<dbReference type="PRINTS" id="PR01243">
    <property type="entry name" value="NUCDPKINASE"/>
</dbReference>
<dbReference type="SMART" id="SM00562">
    <property type="entry name" value="NDK"/>
    <property type="match status" value="1"/>
</dbReference>
<dbReference type="SUPFAM" id="SSF54919">
    <property type="entry name" value="Nucleoside diphosphate kinase, NDK"/>
    <property type="match status" value="1"/>
</dbReference>
<dbReference type="PROSITE" id="PS00469">
    <property type="entry name" value="NDPK"/>
    <property type="match status" value="1"/>
</dbReference>
<dbReference type="PROSITE" id="PS51374">
    <property type="entry name" value="NDPK_LIKE"/>
    <property type="match status" value="1"/>
</dbReference>
<proteinExistence type="inferred from homology"/>
<sequence>MEQTLSIIKPDSVGKAHIGEIVAIFEKAGFRIAAMKMVHLSAKEAEGFYAVHKSRPFFQELVDFMISGPVVVMVLEGDNAVVRNREIMGATNPQEAAQGTIRAQFGESIGINAVHGSDSLENAAIEISYFFSKTEIVNSVE</sequence>
<comment type="function">
    <text evidence="1">Major role in the synthesis of nucleoside triphosphates other than ATP. The ATP gamma phosphate is transferred to the NDP beta phosphate via a ping-pong mechanism, using a phosphorylated active-site intermediate.</text>
</comment>
<comment type="catalytic activity">
    <reaction evidence="1">
        <text>a 2'-deoxyribonucleoside 5'-diphosphate + ATP = a 2'-deoxyribonucleoside 5'-triphosphate + ADP</text>
        <dbReference type="Rhea" id="RHEA:44640"/>
        <dbReference type="ChEBI" id="CHEBI:30616"/>
        <dbReference type="ChEBI" id="CHEBI:61560"/>
        <dbReference type="ChEBI" id="CHEBI:73316"/>
        <dbReference type="ChEBI" id="CHEBI:456216"/>
        <dbReference type="EC" id="2.7.4.6"/>
    </reaction>
</comment>
<comment type="catalytic activity">
    <reaction evidence="1">
        <text>a ribonucleoside 5'-diphosphate + ATP = a ribonucleoside 5'-triphosphate + ADP</text>
        <dbReference type="Rhea" id="RHEA:18113"/>
        <dbReference type="ChEBI" id="CHEBI:30616"/>
        <dbReference type="ChEBI" id="CHEBI:57930"/>
        <dbReference type="ChEBI" id="CHEBI:61557"/>
        <dbReference type="ChEBI" id="CHEBI:456216"/>
        <dbReference type="EC" id="2.7.4.6"/>
    </reaction>
</comment>
<comment type="cofactor">
    <cofactor evidence="1">
        <name>Mg(2+)</name>
        <dbReference type="ChEBI" id="CHEBI:18420"/>
    </cofactor>
</comment>
<comment type="subunit">
    <text evidence="1">Homotetramer.</text>
</comment>
<comment type="subcellular location">
    <subcellularLocation>
        <location evidence="1">Cytoplasm</location>
    </subcellularLocation>
</comment>
<comment type="similarity">
    <text evidence="1">Belongs to the NDK family.</text>
</comment>
<protein>
    <recommendedName>
        <fullName evidence="1">Nucleoside diphosphate kinase</fullName>
        <shortName evidence="1">NDK</shortName>
        <shortName evidence="1">NDP kinase</shortName>
        <ecNumber evidence="1">2.7.4.6</ecNumber>
    </recommendedName>
    <alternativeName>
        <fullName evidence="1">Nucleoside-2-P kinase</fullName>
    </alternativeName>
</protein>
<organism>
    <name type="scientific">Chlamydia felis (strain Fe/C-56)</name>
    <name type="common">Chlamydophila felis</name>
    <dbReference type="NCBI Taxonomy" id="264202"/>
    <lineage>
        <taxon>Bacteria</taxon>
        <taxon>Pseudomonadati</taxon>
        <taxon>Chlamydiota</taxon>
        <taxon>Chlamydiia</taxon>
        <taxon>Chlamydiales</taxon>
        <taxon>Chlamydiaceae</taxon>
        <taxon>Chlamydia/Chlamydophila group</taxon>
        <taxon>Chlamydia</taxon>
    </lineage>
</organism>
<accession>Q252Y1</accession>
<reference key="1">
    <citation type="journal article" date="2006" name="DNA Res.">
        <title>Genome sequence of the cat pathogen, Chlamydophila felis.</title>
        <authorList>
            <person name="Azuma Y."/>
            <person name="Hirakawa H."/>
            <person name="Yamashita A."/>
            <person name="Cai Y."/>
            <person name="Rahman M.A."/>
            <person name="Suzuki H."/>
            <person name="Mitaku S."/>
            <person name="Toh H."/>
            <person name="Goto S."/>
            <person name="Murakami T."/>
            <person name="Sugi K."/>
            <person name="Hayashi H."/>
            <person name="Fukushi H."/>
            <person name="Hattori M."/>
            <person name="Kuhara S."/>
            <person name="Shirai M."/>
        </authorList>
    </citation>
    <scope>NUCLEOTIDE SEQUENCE [LARGE SCALE GENOMIC DNA]</scope>
    <source>
        <strain>Fe/C-56</strain>
    </source>
</reference>